<comment type="function">
    <text evidence="2">May be involved in the formation or repair of [Fe-S] clusters present in iron-sulfur proteins.</text>
</comment>
<comment type="cofactor">
    <cofactor evidence="1">
        <name>[2Fe-2S] cluster</name>
        <dbReference type="ChEBI" id="CHEBI:190135"/>
    </cofactor>
    <text evidence="1">Binds 1 [2Fe-2S] cluster per subunit.</text>
</comment>
<comment type="miscellaneous">
    <text evidence="2">The second ligand for the 2Fe-2S cluster is Ser-139 but should probably be Cys (Probable).</text>
</comment>
<comment type="similarity">
    <text evidence="2">Belongs to the NifU family.</text>
</comment>
<sequence length="309" mass="33933">MWDYSEKVKEHFYNPKNAGAVEGANAIGDVGSLSCGDRLRLTLKVDPETDVILDAGFQTFGCGSAIASSSALTEMVKGADLDDALKISNRDIAHFLGRLPREKMHCSVMGRERLQAAVANYRGEELRTDHEKPQLICKSFAIDEVMVRDTIRANKLSTVEDVTKHTKRGGGCSACHEGIERVLSEELAPVARSSSCADQGQEEVKVLAPSRLRSWPRRLRATPKLSNLQRIRRIETVLAAIRPTLQRDKGDVELIDVDGKNIYVKLTGACTGCQMASMTLGGIQQRLIEELGEFVKVIPVSAGPRQMEV</sequence>
<name>NIFU_AZOCH</name>
<accession>P23121</accession>
<protein>
    <recommendedName>
        <fullName>Nitrogen fixation protein NifU</fullName>
    </recommendedName>
</protein>
<gene>
    <name type="primary">nifU</name>
</gene>
<proteinExistence type="inferred from homology"/>
<feature type="chain" id="PRO_0000166167" description="Nitrogen fixation protein NifU">
    <location>
        <begin position="1"/>
        <end position="309"/>
    </location>
</feature>
<feature type="binding site" evidence="1">
    <location>
        <position position="137"/>
    </location>
    <ligand>
        <name>[2Fe-2S] cluster</name>
        <dbReference type="ChEBI" id="CHEBI:190135"/>
    </ligand>
</feature>
<feature type="binding site" evidence="1">
    <location>
        <position position="172"/>
    </location>
    <ligand>
        <name>[2Fe-2S] cluster</name>
        <dbReference type="ChEBI" id="CHEBI:190135"/>
    </ligand>
</feature>
<feature type="binding site" evidence="1">
    <location>
        <position position="175"/>
    </location>
    <ligand>
        <name>[2Fe-2S] cluster</name>
        <dbReference type="ChEBI" id="CHEBI:190135"/>
    </ligand>
</feature>
<dbReference type="EMBL" id="M60090">
    <property type="protein sequence ID" value="AAA22159.1"/>
    <property type="molecule type" value="Genomic_DNA"/>
</dbReference>
<dbReference type="PIR" id="A43706">
    <property type="entry name" value="A43706"/>
</dbReference>
<dbReference type="SMR" id="P23121"/>
<dbReference type="GO" id="GO:0051537">
    <property type="term" value="F:2 iron, 2 sulfur cluster binding"/>
    <property type="evidence" value="ECO:0007669"/>
    <property type="project" value="UniProtKB-KW"/>
</dbReference>
<dbReference type="GO" id="GO:0005506">
    <property type="term" value="F:iron ion binding"/>
    <property type="evidence" value="ECO:0007669"/>
    <property type="project" value="InterPro"/>
</dbReference>
<dbReference type="GO" id="GO:0016226">
    <property type="term" value="P:iron-sulfur cluster assembly"/>
    <property type="evidence" value="ECO:0007669"/>
    <property type="project" value="InterPro"/>
</dbReference>
<dbReference type="GO" id="GO:0009399">
    <property type="term" value="P:nitrogen fixation"/>
    <property type="evidence" value="ECO:0007669"/>
    <property type="project" value="UniProtKB-KW"/>
</dbReference>
<dbReference type="CDD" id="cd06664">
    <property type="entry name" value="IscU_like"/>
    <property type="match status" value="1"/>
</dbReference>
<dbReference type="CDD" id="cd19947">
    <property type="entry name" value="NifU_Fer2_BFD-like"/>
    <property type="match status" value="1"/>
</dbReference>
<dbReference type="Gene3D" id="3.90.1010.10">
    <property type="match status" value="1"/>
</dbReference>
<dbReference type="Gene3D" id="1.10.10.1100">
    <property type="entry name" value="BFD-like [2Fe-2S]-binding domain"/>
    <property type="match status" value="1"/>
</dbReference>
<dbReference type="Gene3D" id="3.30.300.130">
    <property type="entry name" value="Fe-S cluster assembly (FSCA)"/>
    <property type="match status" value="1"/>
</dbReference>
<dbReference type="InterPro" id="IPR007419">
    <property type="entry name" value="BFD-like_2Fe2S-bd_dom"/>
</dbReference>
<dbReference type="InterPro" id="IPR041854">
    <property type="entry name" value="BFD-like_2Fe2S-bd_dom_sf"/>
</dbReference>
<dbReference type="InterPro" id="IPR034904">
    <property type="entry name" value="FSCA_dom_sf"/>
</dbReference>
<dbReference type="InterPro" id="IPR016217">
    <property type="entry name" value="N_fixation_NifU"/>
</dbReference>
<dbReference type="InterPro" id="IPR010238">
    <property type="entry name" value="NIF_FeS_clus_asmbl_NifU"/>
</dbReference>
<dbReference type="InterPro" id="IPR001075">
    <property type="entry name" value="NIF_FeS_clus_asmbl_NifU_C"/>
</dbReference>
<dbReference type="InterPro" id="IPR002871">
    <property type="entry name" value="NIF_FeS_clus_asmbl_NifU_N"/>
</dbReference>
<dbReference type="NCBIfam" id="TIGR02000">
    <property type="entry name" value="NifU_proper"/>
    <property type="match status" value="1"/>
</dbReference>
<dbReference type="PANTHER" id="PTHR10093">
    <property type="entry name" value="IRON-SULFUR CLUSTER ASSEMBLY ENZYME NIFU HOMOLOG"/>
    <property type="match status" value="1"/>
</dbReference>
<dbReference type="Pfam" id="PF04324">
    <property type="entry name" value="Fer2_BFD"/>
    <property type="match status" value="1"/>
</dbReference>
<dbReference type="Pfam" id="PF01106">
    <property type="entry name" value="NifU"/>
    <property type="match status" value="1"/>
</dbReference>
<dbReference type="Pfam" id="PF01592">
    <property type="entry name" value="NifU_N"/>
    <property type="match status" value="1"/>
</dbReference>
<dbReference type="PIRSF" id="PIRSF000375">
    <property type="entry name" value="NifU"/>
    <property type="match status" value="1"/>
</dbReference>
<dbReference type="SUPFAM" id="SSF117916">
    <property type="entry name" value="Fe-S cluster assembly (FSCA) domain-like"/>
    <property type="match status" value="1"/>
</dbReference>
<dbReference type="SUPFAM" id="SSF82649">
    <property type="entry name" value="SufE/NifU"/>
    <property type="match status" value="1"/>
</dbReference>
<evidence type="ECO:0000250" key="1">
    <source>
        <dbReference type="UniProtKB" id="P05340"/>
    </source>
</evidence>
<evidence type="ECO:0000305" key="2"/>
<keyword id="KW-0001">2Fe-2S</keyword>
<keyword id="KW-0408">Iron</keyword>
<keyword id="KW-0411">Iron-sulfur</keyword>
<keyword id="KW-0479">Metal-binding</keyword>
<keyword id="KW-0535">Nitrogen fixation</keyword>
<reference key="1">
    <citation type="journal article" date="1991" name="J. Bacteriol.">
        <title>Nucleotide sequence and genetic analysis of the Azotobacter chroococcum nifUSVWZM gene cluster, including a new gene (nifP) which encodes a serine acetyltransferase.</title>
        <authorList>
            <person name="Evans D.J."/>
            <person name="Jones R."/>
            <person name="Woodley P.R."/>
            <person name="Wilborn J.R."/>
            <person name="Robson R.L."/>
        </authorList>
    </citation>
    <scope>NUCLEOTIDE SEQUENCE [GENOMIC DNA]</scope>
</reference>
<organism>
    <name type="scientific">Azotobacter chroococcum mcd 1</name>
    <dbReference type="NCBI Taxonomy" id="355"/>
    <lineage>
        <taxon>Bacteria</taxon>
        <taxon>Pseudomonadati</taxon>
        <taxon>Pseudomonadota</taxon>
        <taxon>Gammaproteobacteria</taxon>
        <taxon>Pseudomonadales</taxon>
        <taxon>Pseudomonadaceae</taxon>
        <taxon>Azotobacter</taxon>
    </lineage>
</organism>